<keyword id="KW-0010">Activator</keyword>
<keyword id="KW-0238">DNA-binding</keyword>
<keyword id="KW-0597">Phosphoprotein</keyword>
<keyword id="KW-1185">Reference proteome</keyword>
<keyword id="KW-0804">Transcription</keyword>
<keyword id="KW-0805">Transcription regulation</keyword>
<keyword id="KW-0902">Two-component regulatory system</keyword>
<keyword id="KW-0843">Virulence</keyword>
<comment type="function">
    <text>Member of the two-component regulatory system BvgS/BvgA. Activates the transcription of virulence genes.</text>
</comment>
<comment type="subunit">
    <text>Homodimer.</text>
</comment>
<comment type="PTM">
    <text>Phosphorylated by BvgS.</text>
</comment>
<comment type="mass spectrometry"/>
<feature type="chain" id="PRO_0000081034" description="Virulence factors putative positive transcription regulator BvgA">
    <location>
        <begin position="1"/>
        <end position="209"/>
    </location>
</feature>
<feature type="domain" description="Response regulatory" evidence="1">
    <location>
        <begin position="4"/>
        <end position="119"/>
    </location>
</feature>
<feature type="domain" description="HTH luxR-type" evidence="2">
    <location>
        <begin position="142"/>
        <end position="207"/>
    </location>
</feature>
<feature type="DNA-binding region" description="H-T-H motif" evidence="2">
    <location>
        <begin position="166"/>
        <end position="185"/>
    </location>
</feature>
<feature type="modified residue" description="4-aspartylphosphate" evidence="1">
    <location>
        <position position="54"/>
    </location>
</feature>
<sequence>MYNKVLIIDDHPVLRFAVRVLMEKEGFEVIGETDNGIDGLKIAREKIPNLVVLDIGIPKLDGLEVIARLQSLGLPLRVLVLTGQPPSLFARRCLNSGAAGFVCKHENLHEVINAAKAVMAGYTYFPSTTLSEMRMGDNAKSDSTLISVLSNRELTVLQLLAQGMSNKDIADSMFLSNKTVSTYKTRLLQKLNATSLVELIDLAKRNNLA</sequence>
<reference key="1">
    <citation type="journal article" date="1989" name="Proc. Natl. Acad. Sci. U.S.A.">
        <title>Sequences required for expression of Bordetella pertussis virulence factors share homology with prokaryotic signal transduction proteins.</title>
        <authorList>
            <person name="Arico B."/>
            <person name="Miller J.F."/>
            <person name="Roy C."/>
            <person name="Stibitz S."/>
            <person name="Monack D.M."/>
            <person name="Falkow S."/>
            <person name="Gross R."/>
            <person name="Rappuoli R."/>
        </authorList>
    </citation>
    <scope>NUCLEOTIDE SEQUENCE [GENOMIC DNA]</scope>
</reference>
<reference key="2">
    <citation type="journal article" date="2003" name="Nat. Genet.">
        <title>Comparative analysis of the genome sequences of Bordetella pertussis, Bordetella parapertussis and Bordetella bronchiseptica.</title>
        <authorList>
            <person name="Parkhill J."/>
            <person name="Sebaihia M."/>
            <person name="Preston A."/>
            <person name="Murphy L.D."/>
            <person name="Thomson N.R."/>
            <person name="Harris D.E."/>
            <person name="Holden M.T.G."/>
            <person name="Churcher C.M."/>
            <person name="Bentley S.D."/>
            <person name="Mungall K.L."/>
            <person name="Cerdeno-Tarraga A.-M."/>
            <person name="Temple L."/>
            <person name="James K.D."/>
            <person name="Harris B."/>
            <person name="Quail M.A."/>
            <person name="Achtman M."/>
            <person name="Atkin R."/>
            <person name="Baker S."/>
            <person name="Basham D."/>
            <person name="Bason N."/>
            <person name="Cherevach I."/>
            <person name="Chillingworth T."/>
            <person name="Collins M."/>
            <person name="Cronin A."/>
            <person name="Davis P."/>
            <person name="Doggett J."/>
            <person name="Feltwell T."/>
            <person name="Goble A."/>
            <person name="Hamlin N."/>
            <person name="Hauser H."/>
            <person name="Holroyd S."/>
            <person name="Jagels K."/>
            <person name="Leather S."/>
            <person name="Moule S."/>
            <person name="Norberczak H."/>
            <person name="O'Neil S."/>
            <person name="Ormond D."/>
            <person name="Price C."/>
            <person name="Rabbinowitsch E."/>
            <person name="Rutter S."/>
            <person name="Sanders M."/>
            <person name="Saunders D."/>
            <person name="Seeger K."/>
            <person name="Sharp S."/>
            <person name="Simmonds M."/>
            <person name="Skelton J."/>
            <person name="Squares R."/>
            <person name="Squares S."/>
            <person name="Stevens K."/>
            <person name="Unwin L."/>
            <person name="Whitehead S."/>
            <person name="Barrell B.G."/>
            <person name="Maskell D.J."/>
        </authorList>
    </citation>
    <scope>NUCLEOTIDE SEQUENCE [LARGE SCALE GENOMIC DNA]</scope>
    <source>
        <strain>Tohama I / ATCC BAA-589 / NCTC 13251</strain>
    </source>
</reference>
<reference key="3">
    <citation type="journal article" date="1990" name="Proc. Natl. Acad. Sci. U.S.A.">
        <title>Positive transcriptional feedback at the bvg locus controls expression of virulence factors in Bordetella pertussis.</title>
        <authorList>
            <person name="Scarlato V."/>
            <person name="Prugnola A."/>
            <person name="Arico B."/>
            <person name="Rappuoli R."/>
        </authorList>
    </citation>
    <scope>NUCLEOTIDE SEQUENCE [GENOMIC DNA] OF 1-7</scope>
</reference>
<reference key="4">
    <citation type="journal article" date="1994" name="Proc. Natl. Acad. Sci. U.S.A.">
        <title>Autophosphorylation and phosphotransfer in the Bordetella pertussis BvgAS signal transduction cascade.</title>
        <authorList>
            <person name="Uhl M.A."/>
            <person name="Miller J.F."/>
        </authorList>
    </citation>
    <scope>CHARACTERIZATION</scope>
</reference>
<reference key="5">
    <citation type="journal article" date="1998" name="Mol. Microbiol.">
        <title>Specificity of the BvgAS and EvgAS phosphorelay is mediated by the C-terminal HPt domains of the sensor proteins.</title>
        <authorList>
            <person name="Perraud A.-L."/>
            <person name="Kimmel B."/>
            <person name="Weiss V."/>
            <person name="Gross R."/>
        </authorList>
    </citation>
    <scope>CHARACTERIZATION</scope>
</reference>
<reference key="6">
    <citation type="journal article" date="2000" name="Biochim. Biophys. Acta">
        <title>Dimerization of signalling modules of the EvgAS and BvgAS phosphorelay systems.</title>
        <authorList>
            <person name="Perraud A.-L."/>
            <person name="Rippe K."/>
            <person name="Bantscheff M."/>
            <person name="Glocker M."/>
            <person name="Lucassen M."/>
            <person name="Jung K."/>
            <person name="Sebald W."/>
            <person name="Weiss V."/>
            <person name="Gross R."/>
        </authorList>
    </citation>
    <scope>CHARACTERIZATION</scope>
    <scope>MASS SPECTROMETRY</scope>
</reference>
<proteinExistence type="evidence at protein level"/>
<accession>P0A4H2</accession>
<accession>P16574</accession>
<evidence type="ECO:0000255" key="1">
    <source>
        <dbReference type="PROSITE-ProRule" id="PRU00169"/>
    </source>
</evidence>
<evidence type="ECO:0000255" key="2">
    <source>
        <dbReference type="PROSITE-ProRule" id="PRU00411"/>
    </source>
</evidence>
<evidence type="ECO:0000269" key="3">
    <source>
    </source>
</evidence>
<dbReference type="EMBL" id="M25401">
    <property type="protein sequence ID" value="AAA22969.1"/>
    <property type="molecule type" value="Genomic_DNA"/>
</dbReference>
<dbReference type="EMBL" id="BX640416">
    <property type="protein sequence ID" value="CAE42161.1"/>
    <property type="molecule type" value="Genomic_DNA"/>
</dbReference>
<dbReference type="PIR" id="B33729">
    <property type="entry name" value="VZBRGP"/>
</dbReference>
<dbReference type="RefSeq" id="NP_880570.1">
    <property type="nucleotide sequence ID" value="NC_002929.2"/>
</dbReference>
<dbReference type="RefSeq" id="WP_010930609.1">
    <property type="nucleotide sequence ID" value="NZ_CP039022.1"/>
</dbReference>
<dbReference type="SMR" id="P0A4H2"/>
<dbReference type="STRING" id="257313.BP1878"/>
<dbReference type="PaxDb" id="257313-BP1878"/>
<dbReference type="GeneID" id="93204813"/>
<dbReference type="KEGG" id="bpe:BP1878"/>
<dbReference type="PATRIC" id="fig|257313.5.peg.2017"/>
<dbReference type="eggNOG" id="COG2197">
    <property type="taxonomic scope" value="Bacteria"/>
</dbReference>
<dbReference type="HOGENOM" id="CLU_000445_90_1_4"/>
<dbReference type="Proteomes" id="UP000002676">
    <property type="component" value="Chromosome"/>
</dbReference>
<dbReference type="GO" id="GO:0003677">
    <property type="term" value="F:DNA binding"/>
    <property type="evidence" value="ECO:0007669"/>
    <property type="project" value="UniProtKB-KW"/>
</dbReference>
<dbReference type="GO" id="GO:0000160">
    <property type="term" value="P:phosphorelay signal transduction system"/>
    <property type="evidence" value="ECO:0007669"/>
    <property type="project" value="UniProtKB-KW"/>
</dbReference>
<dbReference type="GO" id="GO:0006355">
    <property type="term" value="P:regulation of DNA-templated transcription"/>
    <property type="evidence" value="ECO:0007669"/>
    <property type="project" value="InterPro"/>
</dbReference>
<dbReference type="CDD" id="cd06170">
    <property type="entry name" value="LuxR_C_like"/>
    <property type="match status" value="1"/>
</dbReference>
<dbReference type="CDD" id="cd17535">
    <property type="entry name" value="REC_NarL-like"/>
    <property type="match status" value="1"/>
</dbReference>
<dbReference type="Gene3D" id="3.40.50.2300">
    <property type="match status" value="1"/>
</dbReference>
<dbReference type="InterPro" id="IPR011006">
    <property type="entry name" value="CheY-like_superfamily"/>
</dbReference>
<dbReference type="InterPro" id="IPR001789">
    <property type="entry name" value="Sig_transdc_resp-reg_receiver"/>
</dbReference>
<dbReference type="InterPro" id="IPR000792">
    <property type="entry name" value="Tscrpt_reg_LuxR_C"/>
</dbReference>
<dbReference type="InterPro" id="IPR039420">
    <property type="entry name" value="WalR-like"/>
</dbReference>
<dbReference type="PANTHER" id="PTHR43214:SF41">
    <property type="entry name" value="NITRATE_NITRITE RESPONSE REGULATOR PROTEIN NARP"/>
    <property type="match status" value="1"/>
</dbReference>
<dbReference type="PANTHER" id="PTHR43214">
    <property type="entry name" value="TWO-COMPONENT RESPONSE REGULATOR"/>
    <property type="match status" value="1"/>
</dbReference>
<dbReference type="Pfam" id="PF00196">
    <property type="entry name" value="GerE"/>
    <property type="match status" value="1"/>
</dbReference>
<dbReference type="Pfam" id="PF00072">
    <property type="entry name" value="Response_reg"/>
    <property type="match status" value="1"/>
</dbReference>
<dbReference type="PRINTS" id="PR00038">
    <property type="entry name" value="HTHLUXR"/>
</dbReference>
<dbReference type="SMART" id="SM00421">
    <property type="entry name" value="HTH_LUXR"/>
    <property type="match status" value="1"/>
</dbReference>
<dbReference type="SMART" id="SM00448">
    <property type="entry name" value="REC"/>
    <property type="match status" value="1"/>
</dbReference>
<dbReference type="SUPFAM" id="SSF52172">
    <property type="entry name" value="CheY-like"/>
    <property type="match status" value="1"/>
</dbReference>
<dbReference type="PROSITE" id="PS00622">
    <property type="entry name" value="HTH_LUXR_1"/>
    <property type="match status" value="1"/>
</dbReference>
<dbReference type="PROSITE" id="PS50043">
    <property type="entry name" value="HTH_LUXR_2"/>
    <property type="match status" value="1"/>
</dbReference>
<dbReference type="PROSITE" id="PS50110">
    <property type="entry name" value="RESPONSE_REGULATORY"/>
    <property type="match status" value="1"/>
</dbReference>
<name>BVGA_BORPE</name>
<protein>
    <recommendedName>
        <fullName>Virulence factors putative positive transcription regulator BvgA</fullName>
    </recommendedName>
</protein>
<gene>
    <name type="primary">bvgA</name>
    <name type="ordered locus">BP1878</name>
</gene>
<organism>
    <name type="scientific">Bordetella pertussis (strain Tohama I / ATCC BAA-589 / NCTC 13251)</name>
    <dbReference type="NCBI Taxonomy" id="257313"/>
    <lineage>
        <taxon>Bacteria</taxon>
        <taxon>Pseudomonadati</taxon>
        <taxon>Pseudomonadota</taxon>
        <taxon>Betaproteobacteria</taxon>
        <taxon>Burkholderiales</taxon>
        <taxon>Alcaligenaceae</taxon>
        <taxon>Bordetella</taxon>
    </lineage>
</organism>